<proteinExistence type="inferred from homology"/>
<keyword id="KW-0067">ATP-binding</keyword>
<keyword id="KW-0436">Ligase</keyword>
<keyword id="KW-0479">Metal-binding</keyword>
<keyword id="KW-0547">Nucleotide-binding</keyword>
<keyword id="KW-0671">Queuosine biosynthesis</keyword>
<keyword id="KW-0862">Zinc</keyword>
<organism>
    <name type="scientific">Alteromonas mediterranea (strain DSM 17117 / CIP 110805 / LMG 28347 / Deep ecotype)</name>
    <dbReference type="NCBI Taxonomy" id="1774373"/>
    <lineage>
        <taxon>Bacteria</taxon>
        <taxon>Pseudomonadati</taxon>
        <taxon>Pseudomonadota</taxon>
        <taxon>Gammaproteobacteria</taxon>
        <taxon>Alteromonadales</taxon>
        <taxon>Alteromonadaceae</taxon>
        <taxon>Alteromonas/Salinimonas group</taxon>
        <taxon>Alteromonas</taxon>
    </lineage>
</organism>
<protein>
    <recommendedName>
        <fullName evidence="1">7-cyano-7-deazaguanine synthase</fullName>
        <ecNumber evidence="1">6.3.4.20</ecNumber>
    </recommendedName>
    <alternativeName>
        <fullName evidence="1">7-cyano-7-carbaguanine synthase</fullName>
    </alternativeName>
    <alternativeName>
        <fullName evidence="1">PreQ(0) synthase</fullName>
    </alternativeName>
    <alternativeName>
        <fullName evidence="1">Queuosine biosynthesis protein QueC</fullName>
    </alternativeName>
</protein>
<sequence>MSENVVVIYSGGMDSFTVLHKALRAGKKVHALSFDYGQRHKKELDYAAAVCTSLGVPHKIVDISAINTLIGGSALTSDIDVPEGHYEEPSMKQTVVPNRNMILLSLAVGYAVSLDANEVYYGAHSGDHAIYPDCRPEFVHKMNDVCGIANYTPVTIMTPYIKDSKTAILTDGLSMGLDYGQTWTCYNGREKACGKCGACEERLEAFKDNGATDPLEYE</sequence>
<name>QUEC_ALTMD</name>
<feature type="chain" id="PRO_1000186550" description="7-cyano-7-deazaguanine synthase">
    <location>
        <begin position="1"/>
        <end position="218"/>
    </location>
</feature>
<feature type="binding site" evidence="1">
    <location>
        <begin position="9"/>
        <end position="19"/>
    </location>
    <ligand>
        <name>ATP</name>
        <dbReference type="ChEBI" id="CHEBI:30616"/>
    </ligand>
</feature>
<feature type="binding site" evidence="1">
    <location>
        <position position="185"/>
    </location>
    <ligand>
        <name>Zn(2+)</name>
        <dbReference type="ChEBI" id="CHEBI:29105"/>
    </ligand>
</feature>
<feature type="binding site" evidence="1">
    <location>
        <position position="193"/>
    </location>
    <ligand>
        <name>Zn(2+)</name>
        <dbReference type="ChEBI" id="CHEBI:29105"/>
    </ligand>
</feature>
<feature type="binding site" evidence="1">
    <location>
        <position position="196"/>
    </location>
    <ligand>
        <name>Zn(2+)</name>
        <dbReference type="ChEBI" id="CHEBI:29105"/>
    </ligand>
</feature>
<feature type="binding site" evidence="1">
    <location>
        <position position="199"/>
    </location>
    <ligand>
        <name>Zn(2+)</name>
        <dbReference type="ChEBI" id="CHEBI:29105"/>
    </ligand>
</feature>
<reference key="1">
    <citation type="journal article" date="2008" name="ISME J.">
        <title>Comparative genomics of two ecotypes of the marine planktonic copiotroph Alteromonas macleodii suggests alternative lifestyles associated with different kinds of particulate organic matter.</title>
        <authorList>
            <person name="Ivars-Martinez E."/>
            <person name="Martin-Cuadrado A.-B."/>
            <person name="D'Auria G."/>
            <person name="Mira A."/>
            <person name="Ferriera S."/>
            <person name="Johnson J."/>
            <person name="Friedman R."/>
            <person name="Rodriguez-Valera F."/>
        </authorList>
    </citation>
    <scope>NUCLEOTIDE SEQUENCE [LARGE SCALE GENOMIC DNA]</scope>
    <source>
        <strain>DSM 17117 / CIP 110805 / LMG 28347 / Deep ecotype</strain>
    </source>
</reference>
<evidence type="ECO:0000255" key="1">
    <source>
        <dbReference type="HAMAP-Rule" id="MF_01633"/>
    </source>
</evidence>
<dbReference type="EC" id="6.3.4.20" evidence="1"/>
<dbReference type="EMBL" id="CP001103">
    <property type="protein sequence ID" value="AEA97478.1"/>
    <property type="molecule type" value="Genomic_DNA"/>
</dbReference>
<dbReference type="RefSeq" id="WP_012517820.1">
    <property type="nucleotide sequence ID" value="NC_011138.3"/>
</dbReference>
<dbReference type="SMR" id="B4RTX3"/>
<dbReference type="GeneID" id="56341695"/>
<dbReference type="KEGG" id="amc:MADE_1006680"/>
<dbReference type="HOGENOM" id="CLU_081854_1_0_6"/>
<dbReference type="UniPathway" id="UPA00391"/>
<dbReference type="Proteomes" id="UP000001870">
    <property type="component" value="Chromosome"/>
</dbReference>
<dbReference type="GO" id="GO:0005524">
    <property type="term" value="F:ATP binding"/>
    <property type="evidence" value="ECO:0007669"/>
    <property type="project" value="UniProtKB-UniRule"/>
</dbReference>
<dbReference type="GO" id="GO:0016879">
    <property type="term" value="F:ligase activity, forming carbon-nitrogen bonds"/>
    <property type="evidence" value="ECO:0007669"/>
    <property type="project" value="UniProtKB-UniRule"/>
</dbReference>
<dbReference type="GO" id="GO:0008270">
    <property type="term" value="F:zinc ion binding"/>
    <property type="evidence" value="ECO:0007669"/>
    <property type="project" value="UniProtKB-UniRule"/>
</dbReference>
<dbReference type="GO" id="GO:0008616">
    <property type="term" value="P:queuosine biosynthetic process"/>
    <property type="evidence" value="ECO:0007669"/>
    <property type="project" value="UniProtKB-UniRule"/>
</dbReference>
<dbReference type="CDD" id="cd01995">
    <property type="entry name" value="QueC-like"/>
    <property type="match status" value="1"/>
</dbReference>
<dbReference type="Gene3D" id="3.40.50.620">
    <property type="entry name" value="HUPs"/>
    <property type="match status" value="1"/>
</dbReference>
<dbReference type="HAMAP" id="MF_01633">
    <property type="entry name" value="QueC"/>
    <property type="match status" value="1"/>
</dbReference>
<dbReference type="InterPro" id="IPR018317">
    <property type="entry name" value="QueC"/>
</dbReference>
<dbReference type="InterPro" id="IPR014729">
    <property type="entry name" value="Rossmann-like_a/b/a_fold"/>
</dbReference>
<dbReference type="NCBIfam" id="TIGR00364">
    <property type="entry name" value="7-cyano-7-deazaguanine synthase QueC"/>
    <property type="match status" value="1"/>
</dbReference>
<dbReference type="PANTHER" id="PTHR42914">
    <property type="entry name" value="7-CYANO-7-DEAZAGUANINE SYNTHASE"/>
    <property type="match status" value="1"/>
</dbReference>
<dbReference type="PANTHER" id="PTHR42914:SF1">
    <property type="entry name" value="7-CYANO-7-DEAZAGUANINE SYNTHASE"/>
    <property type="match status" value="1"/>
</dbReference>
<dbReference type="Pfam" id="PF06508">
    <property type="entry name" value="QueC"/>
    <property type="match status" value="1"/>
</dbReference>
<dbReference type="PIRSF" id="PIRSF006293">
    <property type="entry name" value="ExsB"/>
    <property type="match status" value="1"/>
</dbReference>
<dbReference type="SUPFAM" id="SSF52402">
    <property type="entry name" value="Adenine nucleotide alpha hydrolases-like"/>
    <property type="match status" value="1"/>
</dbReference>
<comment type="function">
    <text evidence="1">Catalyzes the ATP-dependent conversion of 7-carboxy-7-deazaguanine (CDG) to 7-cyano-7-deazaguanine (preQ(0)).</text>
</comment>
<comment type="catalytic activity">
    <reaction evidence="1">
        <text>7-carboxy-7-deazaguanine + NH4(+) + ATP = 7-cyano-7-deazaguanine + ADP + phosphate + H2O + H(+)</text>
        <dbReference type="Rhea" id="RHEA:27982"/>
        <dbReference type="ChEBI" id="CHEBI:15377"/>
        <dbReference type="ChEBI" id="CHEBI:15378"/>
        <dbReference type="ChEBI" id="CHEBI:28938"/>
        <dbReference type="ChEBI" id="CHEBI:30616"/>
        <dbReference type="ChEBI" id="CHEBI:43474"/>
        <dbReference type="ChEBI" id="CHEBI:45075"/>
        <dbReference type="ChEBI" id="CHEBI:61036"/>
        <dbReference type="ChEBI" id="CHEBI:456216"/>
        <dbReference type="EC" id="6.3.4.20"/>
    </reaction>
</comment>
<comment type="cofactor">
    <cofactor evidence="1">
        <name>Zn(2+)</name>
        <dbReference type="ChEBI" id="CHEBI:29105"/>
    </cofactor>
    <text evidence="1">Binds 1 zinc ion per subunit.</text>
</comment>
<comment type="pathway">
    <text evidence="1">Purine metabolism; 7-cyano-7-deazaguanine biosynthesis.</text>
</comment>
<comment type="similarity">
    <text evidence="1">Belongs to the QueC family.</text>
</comment>
<gene>
    <name evidence="1" type="primary">queC</name>
    <name type="ordered locus">MADE_1006680</name>
</gene>
<accession>B4RTX3</accession>
<accession>F2G5Q7</accession>